<feature type="signal peptide" evidence="2">
    <location>
        <begin position="1"/>
        <end position="19"/>
    </location>
</feature>
<feature type="chain" id="PRO_0000045368" description="Beta-defensin 129">
    <location>
        <begin position="20"/>
        <end position="183"/>
    </location>
</feature>
<feature type="region of interest" description="Disordered" evidence="3">
    <location>
        <begin position="141"/>
        <end position="183"/>
    </location>
</feature>
<feature type="compositionally biased region" description="Pro residues" evidence="3">
    <location>
        <begin position="159"/>
        <end position="170"/>
    </location>
</feature>
<feature type="disulfide bond" evidence="1">
    <location>
        <begin position="27"/>
        <end position="53"/>
    </location>
</feature>
<feature type="disulfide bond" evidence="1">
    <location>
        <begin position="34"/>
        <end position="48"/>
    </location>
</feature>
<feature type="disulfide bond" evidence="1">
    <location>
        <begin position="38"/>
        <end position="54"/>
    </location>
</feature>
<dbReference type="EMBL" id="DQ012080">
    <property type="protein sequence ID" value="AAY59810.1"/>
    <property type="molecule type" value="mRNA"/>
</dbReference>
<dbReference type="EMBL" id="AM410161">
    <property type="protein sequence ID" value="CAL68971.1"/>
    <property type="molecule type" value="Genomic_DNA"/>
</dbReference>
<dbReference type="RefSeq" id="NP_001073396.1">
    <property type="nucleotide sequence ID" value="NM_001079927.1"/>
</dbReference>
<dbReference type="STRING" id="9598.ENSPTRP00000022492"/>
<dbReference type="PaxDb" id="9598-ENSPTRP00000022492"/>
<dbReference type="Ensembl" id="ENSPTRT00000024383.4">
    <property type="protein sequence ID" value="ENSPTRP00000022492.3"/>
    <property type="gene ID" value="ENSPTRG00000013137.4"/>
</dbReference>
<dbReference type="GeneID" id="745478"/>
<dbReference type="KEGG" id="ptr:745478"/>
<dbReference type="CTD" id="140881"/>
<dbReference type="VGNC" id="VGNC:6094">
    <property type="gene designation" value="DEFB129"/>
</dbReference>
<dbReference type="eggNOG" id="ENOG502TDUT">
    <property type="taxonomic scope" value="Eukaryota"/>
</dbReference>
<dbReference type="GeneTree" id="ENSGT00390000008616"/>
<dbReference type="HOGENOM" id="CLU_1618467_0_0_1"/>
<dbReference type="InParanoid" id="Q30KK0"/>
<dbReference type="OMA" id="RRCLMGF"/>
<dbReference type="OrthoDB" id="14465at9604"/>
<dbReference type="Proteomes" id="UP000002277">
    <property type="component" value="Chromosome 20"/>
</dbReference>
<dbReference type="GO" id="GO:0005576">
    <property type="term" value="C:extracellular region"/>
    <property type="evidence" value="ECO:0007669"/>
    <property type="project" value="UniProtKB-SubCell"/>
</dbReference>
<dbReference type="GO" id="GO:0042742">
    <property type="term" value="P:defense response to bacterium"/>
    <property type="evidence" value="ECO:0007669"/>
    <property type="project" value="UniProtKB-KW"/>
</dbReference>
<keyword id="KW-0044">Antibiotic</keyword>
<keyword id="KW-0929">Antimicrobial</keyword>
<keyword id="KW-0211">Defensin</keyword>
<keyword id="KW-1015">Disulfide bond</keyword>
<keyword id="KW-1185">Reference proteome</keyword>
<keyword id="KW-0964">Secreted</keyword>
<keyword id="KW-0732">Signal</keyword>
<evidence type="ECO:0000250" key="1"/>
<evidence type="ECO:0000255" key="2"/>
<evidence type="ECO:0000256" key="3">
    <source>
        <dbReference type="SAM" id="MobiDB-lite"/>
    </source>
</evidence>
<evidence type="ECO:0000305" key="4"/>
<protein>
    <recommendedName>
        <fullName>Beta-defensin 129</fullName>
    </recommendedName>
    <alternativeName>
        <fullName>Defensin, beta 129</fullName>
    </alternativeName>
</protein>
<accession>Q30KK0</accession>
<accession>A4H256</accession>
<sequence>MKLLFPIFASLMLQYQVNTEFIGLRRCLMGLGRCRDHCNVDEKEIQKCKMKKCCVGPKVVKLIKNYLQYGTPNVLNEDVQEMLKPAKNSSAVIQRKHILSVLPQIKSTSFFANTNFVIIPNATPMNSATISTMTPGQITYTATSTKSNTKESRDSATASPPPAPPPPNILPTPSLELEEAEEQ</sequence>
<reference key="1">
    <citation type="journal article" date="2005" name="Physiol. Genomics">
        <title>Cross-species analysis of the mammalian beta-defensin gene family: presence of syntenic gene clusters and preferential expression in the male reproductive tract.</title>
        <authorList>
            <person name="Patil A.A."/>
            <person name="Cai Y."/>
            <person name="Sang Y."/>
            <person name="Blecha F."/>
            <person name="Zhang G."/>
        </authorList>
    </citation>
    <scope>NUCLEOTIDE SEQUENCE [MRNA]</scope>
</reference>
<reference key="2">
    <citation type="submission" date="2006-11" db="EMBL/GenBank/DDBJ databases">
        <title>Evolution and sequence variation of human beta-defensin genes.</title>
        <authorList>
            <person name="Hollox E.J."/>
            <person name="Armour J.A.L."/>
        </authorList>
    </citation>
    <scope>NUCLEOTIDE SEQUENCE [GENOMIC DNA]</scope>
</reference>
<comment type="function">
    <text evidence="4">Has antibacterial activity.</text>
</comment>
<comment type="subcellular location">
    <subcellularLocation>
        <location evidence="4">Secreted</location>
    </subcellularLocation>
</comment>
<comment type="similarity">
    <text evidence="4">Belongs to the beta-defensin family.</text>
</comment>
<organism>
    <name type="scientific">Pan troglodytes</name>
    <name type="common">Chimpanzee</name>
    <dbReference type="NCBI Taxonomy" id="9598"/>
    <lineage>
        <taxon>Eukaryota</taxon>
        <taxon>Metazoa</taxon>
        <taxon>Chordata</taxon>
        <taxon>Craniata</taxon>
        <taxon>Vertebrata</taxon>
        <taxon>Euteleostomi</taxon>
        <taxon>Mammalia</taxon>
        <taxon>Eutheria</taxon>
        <taxon>Euarchontoglires</taxon>
        <taxon>Primates</taxon>
        <taxon>Haplorrhini</taxon>
        <taxon>Catarrhini</taxon>
        <taxon>Hominidae</taxon>
        <taxon>Pan</taxon>
    </lineage>
</organism>
<gene>
    <name type="primary">DEFB129</name>
</gene>
<proteinExistence type="evidence at transcript level"/>
<name>DB129_PANTR</name>